<dbReference type="EMBL" id="D78508">
    <property type="protein sequence ID" value="BAA11398.1"/>
    <property type="molecule type" value="Genomic_DNA"/>
</dbReference>
<dbReference type="EMBL" id="AL009126">
    <property type="protein sequence ID" value="CAB12656.1"/>
    <property type="molecule type" value="Genomic_DNA"/>
</dbReference>
<dbReference type="EMBL" id="D50543">
    <property type="protein sequence ID" value="BAA21082.1"/>
    <property type="molecule type" value="Genomic_DNA"/>
</dbReference>
<dbReference type="PIR" id="C69803">
    <property type="entry name" value="C69803"/>
</dbReference>
<dbReference type="RefSeq" id="NP_388708.1">
    <property type="nucleotide sequence ID" value="NC_000964.3"/>
</dbReference>
<dbReference type="RefSeq" id="WP_003244504.1">
    <property type="nucleotide sequence ID" value="NZ_OZ025638.1"/>
</dbReference>
<dbReference type="SMR" id="P54724"/>
<dbReference type="FunCoup" id="P54724">
    <property type="interactions" value="50"/>
</dbReference>
<dbReference type="STRING" id="224308.BSU08270"/>
<dbReference type="PaxDb" id="224308-BSU08270"/>
<dbReference type="EnsemblBacteria" id="CAB12656">
    <property type="protein sequence ID" value="CAB12656"/>
    <property type="gene ID" value="BSU_08270"/>
</dbReference>
<dbReference type="GeneID" id="939706"/>
<dbReference type="KEGG" id="bsu:BSU08270"/>
<dbReference type="PATRIC" id="fig|224308.179.peg.893"/>
<dbReference type="eggNOG" id="COG1082">
    <property type="taxonomic scope" value="Bacteria"/>
</dbReference>
<dbReference type="InParanoid" id="P54724"/>
<dbReference type="OrthoDB" id="9779184at2"/>
<dbReference type="PhylomeDB" id="P54724"/>
<dbReference type="BioCyc" id="BSUB:BSU08270-MONOMER"/>
<dbReference type="Proteomes" id="UP000001570">
    <property type="component" value="Chromosome"/>
</dbReference>
<dbReference type="Gene3D" id="3.20.20.150">
    <property type="entry name" value="Divalent-metal-dependent TIM barrel enzymes"/>
    <property type="match status" value="1"/>
</dbReference>
<dbReference type="InterPro" id="IPR050312">
    <property type="entry name" value="IolE/XylAMocC-like"/>
</dbReference>
<dbReference type="InterPro" id="IPR036237">
    <property type="entry name" value="Xyl_isomerase-like_sf"/>
</dbReference>
<dbReference type="InterPro" id="IPR013022">
    <property type="entry name" value="Xyl_isomerase-like_TIM-brl"/>
</dbReference>
<dbReference type="PANTHER" id="PTHR12110">
    <property type="entry name" value="HYDROXYPYRUVATE ISOMERASE"/>
    <property type="match status" value="1"/>
</dbReference>
<dbReference type="PANTHER" id="PTHR12110:SF21">
    <property type="entry name" value="XYLOSE ISOMERASE-LIKE TIM BARREL DOMAIN-CONTAINING PROTEIN"/>
    <property type="match status" value="1"/>
</dbReference>
<dbReference type="Pfam" id="PF01261">
    <property type="entry name" value="AP_endonuc_2"/>
    <property type="match status" value="1"/>
</dbReference>
<dbReference type="SUPFAM" id="SSF51658">
    <property type="entry name" value="Xylose isomerase-like"/>
    <property type="match status" value="1"/>
</dbReference>
<keyword id="KW-1185">Reference proteome</keyword>
<proteinExistence type="predicted"/>
<feature type="chain" id="PRO_0000049526" description="Uncharacterized protein YfiH">
    <location>
        <begin position="1"/>
        <end position="313"/>
    </location>
</feature>
<protein>
    <recommendedName>
        <fullName>Uncharacterized protein YfiH</fullName>
    </recommendedName>
</protein>
<gene>
    <name type="primary">yfiH</name>
    <name type="ordered locus">BSU08270</name>
</gene>
<reference key="1">
    <citation type="journal article" date="1996" name="Gene">
        <title>The Bacillus subtilis chromosome region near 78 degrees contains the genes encoding a new two-component system, three ABC transporters and a lipase.</title>
        <authorList>
            <person name="Yamamoto H."/>
            <person name="Uchiyama S."/>
            <person name="Sekiguchi J."/>
        </authorList>
    </citation>
    <scope>NUCLEOTIDE SEQUENCE [GENOMIC DNA]</scope>
    <source>
        <strain>168 / AC327</strain>
    </source>
</reference>
<reference key="2">
    <citation type="journal article" date="1997" name="Nature">
        <title>The complete genome sequence of the Gram-positive bacterium Bacillus subtilis.</title>
        <authorList>
            <person name="Kunst F."/>
            <person name="Ogasawara N."/>
            <person name="Moszer I."/>
            <person name="Albertini A.M."/>
            <person name="Alloni G."/>
            <person name="Azevedo V."/>
            <person name="Bertero M.G."/>
            <person name="Bessieres P."/>
            <person name="Bolotin A."/>
            <person name="Borchert S."/>
            <person name="Borriss R."/>
            <person name="Boursier L."/>
            <person name="Brans A."/>
            <person name="Braun M."/>
            <person name="Brignell S.C."/>
            <person name="Bron S."/>
            <person name="Brouillet S."/>
            <person name="Bruschi C.V."/>
            <person name="Caldwell B."/>
            <person name="Capuano V."/>
            <person name="Carter N.M."/>
            <person name="Choi S.-K."/>
            <person name="Codani J.-J."/>
            <person name="Connerton I.F."/>
            <person name="Cummings N.J."/>
            <person name="Daniel R.A."/>
            <person name="Denizot F."/>
            <person name="Devine K.M."/>
            <person name="Duesterhoeft A."/>
            <person name="Ehrlich S.D."/>
            <person name="Emmerson P.T."/>
            <person name="Entian K.-D."/>
            <person name="Errington J."/>
            <person name="Fabret C."/>
            <person name="Ferrari E."/>
            <person name="Foulger D."/>
            <person name="Fritz C."/>
            <person name="Fujita M."/>
            <person name="Fujita Y."/>
            <person name="Fuma S."/>
            <person name="Galizzi A."/>
            <person name="Galleron N."/>
            <person name="Ghim S.-Y."/>
            <person name="Glaser P."/>
            <person name="Goffeau A."/>
            <person name="Golightly E.J."/>
            <person name="Grandi G."/>
            <person name="Guiseppi G."/>
            <person name="Guy B.J."/>
            <person name="Haga K."/>
            <person name="Haiech J."/>
            <person name="Harwood C.R."/>
            <person name="Henaut A."/>
            <person name="Hilbert H."/>
            <person name="Holsappel S."/>
            <person name="Hosono S."/>
            <person name="Hullo M.-F."/>
            <person name="Itaya M."/>
            <person name="Jones L.-M."/>
            <person name="Joris B."/>
            <person name="Karamata D."/>
            <person name="Kasahara Y."/>
            <person name="Klaerr-Blanchard M."/>
            <person name="Klein C."/>
            <person name="Kobayashi Y."/>
            <person name="Koetter P."/>
            <person name="Koningstein G."/>
            <person name="Krogh S."/>
            <person name="Kumano M."/>
            <person name="Kurita K."/>
            <person name="Lapidus A."/>
            <person name="Lardinois S."/>
            <person name="Lauber J."/>
            <person name="Lazarevic V."/>
            <person name="Lee S.-M."/>
            <person name="Levine A."/>
            <person name="Liu H."/>
            <person name="Masuda S."/>
            <person name="Mauel C."/>
            <person name="Medigue C."/>
            <person name="Medina N."/>
            <person name="Mellado R.P."/>
            <person name="Mizuno M."/>
            <person name="Moestl D."/>
            <person name="Nakai S."/>
            <person name="Noback M."/>
            <person name="Noone D."/>
            <person name="O'Reilly M."/>
            <person name="Ogawa K."/>
            <person name="Ogiwara A."/>
            <person name="Oudega B."/>
            <person name="Park S.-H."/>
            <person name="Parro V."/>
            <person name="Pohl T.M."/>
            <person name="Portetelle D."/>
            <person name="Porwollik S."/>
            <person name="Prescott A.M."/>
            <person name="Presecan E."/>
            <person name="Pujic P."/>
            <person name="Purnelle B."/>
            <person name="Rapoport G."/>
            <person name="Rey M."/>
            <person name="Reynolds S."/>
            <person name="Rieger M."/>
            <person name="Rivolta C."/>
            <person name="Rocha E."/>
            <person name="Roche B."/>
            <person name="Rose M."/>
            <person name="Sadaie Y."/>
            <person name="Sato T."/>
            <person name="Scanlan E."/>
            <person name="Schleich S."/>
            <person name="Schroeter R."/>
            <person name="Scoffone F."/>
            <person name="Sekiguchi J."/>
            <person name="Sekowska A."/>
            <person name="Seror S.J."/>
            <person name="Serror P."/>
            <person name="Shin B.-S."/>
            <person name="Soldo B."/>
            <person name="Sorokin A."/>
            <person name="Tacconi E."/>
            <person name="Takagi T."/>
            <person name="Takahashi H."/>
            <person name="Takemaru K."/>
            <person name="Takeuchi M."/>
            <person name="Tamakoshi A."/>
            <person name="Tanaka T."/>
            <person name="Terpstra P."/>
            <person name="Tognoni A."/>
            <person name="Tosato V."/>
            <person name="Uchiyama S."/>
            <person name="Vandenbol M."/>
            <person name="Vannier F."/>
            <person name="Vassarotti A."/>
            <person name="Viari A."/>
            <person name="Wambutt R."/>
            <person name="Wedler E."/>
            <person name="Wedler H."/>
            <person name="Weitzenegger T."/>
            <person name="Winters P."/>
            <person name="Wipat A."/>
            <person name="Yamamoto H."/>
            <person name="Yamane K."/>
            <person name="Yasumoto K."/>
            <person name="Yata K."/>
            <person name="Yoshida K."/>
            <person name="Yoshikawa H.-F."/>
            <person name="Zumstein E."/>
            <person name="Yoshikawa H."/>
            <person name="Danchin A."/>
        </authorList>
    </citation>
    <scope>NUCLEOTIDE SEQUENCE [LARGE SCALE GENOMIC DNA]</scope>
    <source>
        <strain>168</strain>
    </source>
</reference>
<reference key="3">
    <citation type="journal article" date="1996" name="Microbiology">
        <title>Determination of a 12 kb nucleotide sequence around the 76 degrees region of the Bacillus subtilis chromosome.</title>
        <authorList>
            <person name="Yamamoto H."/>
            <person name="Uchiyama S."/>
            <person name="Fajar A.N."/>
            <person name="Ogasawara N."/>
            <person name="Sekiguchi J."/>
        </authorList>
    </citation>
    <scope>NUCLEOTIDE SEQUENCE [GENOMIC DNA] OF 1-148</scope>
    <source>
        <strain>168</strain>
    </source>
</reference>
<organism>
    <name type="scientific">Bacillus subtilis (strain 168)</name>
    <dbReference type="NCBI Taxonomy" id="224308"/>
    <lineage>
        <taxon>Bacteria</taxon>
        <taxon>Bacillati</taxon>
        <taxon>Bacillota</taxon>
        <taxon>Bacilli</taxon>
        <taxon>Bacillales</taxon>
        <taxon>Bacillaceae</taxon>
        <taxon>Bacillus</taxon>
    </lineage>
</organism>
<name>YFIH_BACSU</name>
<sequence length="313" mass="34761">MKLSYVTDSLGHLPFEDMLNFAAKLGIDTLEMTTGGWSPAPHLNLDELLQSSEKRKEFSQALEKRNMTLCALNCSGNPLDPGELGKSHRDITDKTMELAGLLGVKKVIMMSGLPAGGPDDKVPNWITYTVSWPPVLKDILNYQWEDVAIPYWKKLVKKAEACGVGKIALENFSSQLVYNPETLFRLRNAVGPMVGLNLDPSHLLWMGADPIIAARELGSAIHHVHGKDVRIERYLSAVNGLLETKEVTDPANRAWNYVAVGCGQDLQWWKEFFSVVKMMGYEGEVSLEMEDLTMSPEAGIRTSVEALKQTISQ</sequence>
<accession>P54724</accession>